<reference key="1">
    <citation type="submission" date="2008-02" db="EMBL/GenBank/DDBJ databases">
        <title>Complete sequence of Yersinia pseudotuberculosis YPIII.</title>
        <authorList>
            <consortium name="US DOE Joint Genome Institute"/>
            <person name="Copeland A."/>
            <person name="Lucas S."/>
            <person name="Lapidus A."/>
            <person name="Glavina del Rio T."/>
            <person name="Dalin E."/>
            <person name="Tice H."/>
            <person name="Bruce D."/>
            <person name="Goodwin L."/>
            <person name="Pitluck S."/>
            <person name="Munk A.C."/>
            <person name="Brettin T."/>
            <person name="Detter J.C."/>
            <person name="Han C."/>
            <person name="Tapia R."/>
            <person name="Schmutz J."/>
            <person name="Larimer F."/>
            <person name="Land M."/>
            <person name="Hauser L."/>
            <person name="Challacombe J.F."/>
            <person name="Green L."/>
            <person name="Lindler L.E."/>
            <person name="Nikolich M.P."/>
            <person name="Richardson P."/>
        </authorList>
    </citation>
    <scope>NUCLEOTIDE SEQUENCE [LARGE SCALE GENOMIC DNA]</scope>
    <source>
        <strain>YPIII</strain>
    </source>
</reference>
<keyword id="KW-0012">Acyltransferase</keyword>
<keyword id="KW-0963">Cytoplasm</keyword>
<keyword id="KW-0808">Transferase</keyword>
<gene>
    <name evidence="1" type="primary">aat</name>
    <name type="ordered locus">YPK_2690</name>
</gene>
<comment type="function">
    <text evidence="1">Functions in the N-end rule pathway of protein degradation where it conjugates Leu, Phe and, less efficiently, Met from aminoacyl-tRNAs to the N-termini of proteins containing an N-terminal arginine or lysine.</text>
</comment>
<comment type="catalytic activity">
    <reaction evidence="1">
        <text>N-terminal L-lysyl-[protein] + L-leucyl-tRNA(Leu) = N-terminal L-leucyl-L-lysyl-[protein] + tRNA(Leu) + H(+)</text>
        <dbReference type="Rhea" id="RHEA:12340"/>
        <dbReference type="Rhea" id="RHEA-COMP:9613"/>
        <dbReference type="Rhea" id="RHEA-COMP:9622"/>
        <dbReference type="Rhea" id="RHEA-COMP:12670"/>
        <dbReference type="Rhea" id="RHEA-COMP:12671"/>
        <dbReference type="ChEBI" id="CHEBI:15378"/>
        <dbReference type="ChEBI" id="CHEBI:65249"/>
        <dbReference type="ChEBI" id="CHEBI:78442"/>
        <dbReference type="ChEBI" id="CHEBI:78494"/>
        <dbReference type="ChEBI" id="CHEBI:133043"/>
        <dbReference type="EC" id="2.3.2.6"/>
    </reaction>
</comment>
<comment type="catalytic activity">
    <reaction evidence="1">
        <text>N-terminal L-arginyl-[protein] + L-leucyl-tRNA(Leu) = N-terminal L-leucyl-L-arginyl-[protein] + tRNA(Leu) + H(+)</text>
        <dbReference type="Rhea" id="RHEA:50416"/>
        <dbReference type="Rhea" id="RHEA-COMP:9613"/>
        <dbReference type="Rhea" id="RHEA-COMP:9622"/>
        <dbReference type="Rhea" id="RHEA-COMP:12672"/>
        <dbReference type="Rhea" id="RHEA-COMP:12673"/>
        <dbReference type="ChEBI" id="CHEBI:15378"/>
        <dbReference type="ChEBI" id="CHEBI:64719"/>
        <dbReference type="ChEBI" id="CHEBI:78442"/>
        <dbReference type="ChEBI" id="CHEBI:78494"/>
        <dbReference type="ChEBI" id="CHEBI:133044"/>
        <dbReference type="EC" id="2.3.2.6"/>
    </reaction>
</comment>
<comment type="catalytic activity">
    <reaction evidence="1">
        <text>L-phenylalanyl-tRNA(Phe) + an N-terminal L-alpha-aminoacyl-[protein] = an N-terminal L-phenylalanyl-L-alpha-aminoacyl-[protein] + tRNA(Phe)</text>
        <dbReference type="Rhea" id="RHEA:43632"/>
        <dbReference type="Rhea" id="RHEA-COMP:9668"/>
        <dbReference type="Rhea" id="RHEA-COMP:9699"/>
        <dbReference type="Rhea" id="RHEA-COMP:10636"/>
        <dbReference type="Rhea" id="RHEA-COMP:10637"/>
        <dbReference type="ChEBI" id="CHEBI:78442"/>
        <dbReference type="ChEBI" id="CHEBI:78531"/>
        <dbReference type="ChEBI" id="CHEBI:78597"/>
        <dbReference type="ChEBI" id="CHEBI:83561"/>
        <dbReference type="EC" id="2.3.2.6"/>
    </reaction>
</comment>
<comment type="subcellular location">
    <subcellularLocation>
        <location evidence="1">Cytoplasm</location>
    </subcellularLocation>
</comment>
<comment type="similarity">
    <text evidence="1">Belongs to the L/F-transferase family.</text>
</comment>
<protein>
    <recommendedName>
        <fullName evidence="1">Leucyl/phenylalanyl-tRNA--protein transferase</fullName>
        <ecNumber evidence="1">2.3.2.6</ecNumber>
    </recommendedName>
    <alternativeName>
        <fullName evidence="1">L/F-transferase</fullName>
    </alternativeName>
    <alternativeName>
        <fullName evidence="1">Leucyltransferase</fullName>
    </alternativeName>
    <alternativeName>
        <fullName evidence="1">Phenyalanyltransferase</fullName>
    </alternativeName>
</protein>
<name>LFTR_YERPY</name>
<sequence length="236" mass="26403">MRVTQLSSQSFIFPSPELALREPNGLLALGGDLTAPRLLAAYQRGIFPWFNPGEMILWWSPDPRAVLFPEDLHISRSMRRFIRHCPYRFTLNHAFADVISACATERDEGTWIGRDVQQAYCQLHALGHAHSLEVWLENELVGGLYGVAVGAVFCGESMFSRADNASKSALMVFCHHFTQHGGELIDCQVLNAHTASLGAVEIPRNFFLQQLSQLQFSPLPAECWLPQSLNFSSAMQ</sequence>
<evidence type="ECO:0000255" key="1">
    <source>
        <dbReference type="HAMAP-Rule" id="MF_00688"/>
    </source>
</evidence>
<organism>
    <name type="scientific">Yersinia pseudotuberculosis serotype O:3 (strain YPIII)</name>
    <dbReference type="NCBI Taxonomy" id="502800"/>
    <lineage>
        <taxon>Bacteria</taxon>
        <taxon>Pseudomonadati</taxon>
        <taxon>Pseudomonadota</taxon>
        <taxon>Gammaproteobacteria</taxon>
        <taxon>Enterobacterales</taxon>
        <taxon>Yersiniaceae</taxon>
        <taxon>Yersinia</taxon>
    </lineage>
</organism>
<feature type="chain" id="PRO_1000131962" description="Leucyl/phenylalanyl-tRNA--protein transferase">
    <location>
        <begin position="1"/>
        <end position="236"/>
    </location>
</feature>
<dbReference type="EC" id="2.3.2.6" evidence="1"/>
<dbReference type="EMBL" id="CP000950">
    <property type="protein sequence ID" value="ACA68967.1"/>
    <property type="molecule type" value="Genomic_DNA"/>
</dbReference>
<dbReference type="RefSeq" id="WP_002211346.1">
    <property type="nucleotide sequence ID" value="NZ_CP009792.1"/>
</dbReference>
<dbReference type="SMR" id="B1JRF9"/>
<dbReference type="GeneID" id="57977167"/>
<dbReference type="KEGG" id="ypy:YPK_2690"/>
<dbReference type="PATRIC" id="fig|502800.11.peg.3391"/>
<dbReference type="GO" id="GO:0005737">
    <property type="term" value="C:cytoplasm"/>
    <property type="evidence" value="ECO:0007669"/>
    <property type="project" value="UniProtKB-SubCell"/>
</dbReference>
<dbReference type="GO" id="GO:0008914">
    <property type="term" value="F:leucyl-tRNA--protein transferase activity"/>
    <property type="evidence" value="ECO:0007669"/>
    <property type="project" value="UniProtKB-UniRule"/>
</dbReference>
<dbReference type="GO" id="GO:0030163">
    <property type="term" value="P:protein catabolic process"/>
    <property type="evidence" value="ECO:0007669"/>
    <property type="project" value="UniProtKB-UniRule"/>
</dbReference>
<dbReference type="FunFam" id="3.30.70.3550:FF:000001">
    <property type="entry name" value="Leucyl/phenylalanyl-tRNA--protein transferase"/>
    <property type="match status" value="1"/>
</dbReference>
<dbReference type="FunFam" id="3.40.630.70:FF:000001">
    <property type="entry name" value="Leucyl/phenylalanyl-tRNA--protein transferase"/>
    <property type="match status" value="1"/>
</dbReference>
<dbReference type="Gene3D" id="3.40.630.70">
    <property type="entry name" value="Leucyl/phenylalanyl-tRNA-protein transferase, C-terminal domain"/>
    <property type="match status" value="1"/>
</dbReference>
<dbReference type="Gene3D" id="3.30.70.3550">
    <property type="entry name" value="Leucyl/phenylalanyl-tRNA-protein transferase, N-terminal domain"/>
    <property type="match status" value="1"/>
</dbReference>
<dbReference type="HAMAP" id="MF_00688">
    <property type="entry name" value="Leu_Phe_trans"/>
    <property type="match status" value="1"/>
</dbReference>
<dbReference type="InterPro" id="IPR016181">
    <property type="entry name" value="Acyl_CoA_acyltransferase"/>
</dbReference>
<dbReference type="InterPro" id="IPR004616">
    <property type="entry name" value="Leu/Phe-tRNA_Trfase"/>
</dbReference>
<dbReference type="InterPro" id="IPR042203">
    <property type="entry name" value="Leu/Phe-tRNA_Trfase_C"/>
</dbReference>
<dbReference type="InterPro" id="IPR042221">
    <property type="entry name" value="Leu/Phe-tRNA_Trfase_N"/>
</dbReference>
<dbReference type="NCBIfam" id="TIGR00667">
    <property type="entry name" value="aat"/>
    <property type="match status" value="1"/>
</dbReference>
<dbReference type="PANTHER" id="PTHR30098">
    <property type="entry name" value="LEUCYL/PHENYLALANYL-TRNA--PROTEIN TRANSFERASE"/>
    <property type="match status" value="1"/>
</dbReference>
<dbReference type="PANTHER" id="PTHR30098:SF2">
    <property type="entry name" value="LEUCYL_PHENYLALANYL-TRNA--PROTEIN TRANSFERASE"/>
    <property type="match status" value="1"/>
</dbReference>
<dbReference type="Pfam" id="PF03588">
    <property type="entry name" value="Leu_Phe_trans"/>
    <property type="match status" value="1"/>
</dbReference>
<dbReference type="SUPFAM" id="SSF55729">
    <property type="entry name" value="Acyl-CoA N-acyltransferases (Nat)"/>
    <property type="match status" value="1"/>
</dbReference>
<accession>B1JRF9</accession>
<proteinExistence type="inferred from homology"/>